<sequence>MLVLGIETSCDETGIALYDGERGLLAHTLYSQIKLHADYGGVVPELASRDHVRKVIPLIEEVLNQAGVGKSDIDAIAYTAGPGLVGALMVGGAIASALAYALGIPTIGVHHMEGHLLAPMLEENPPEFPFVALLVSGGHTQLVRVDGVGEYELLGESVDDAAGEAFDKVAKMLGLDYPGGPQVAKLAEEGNLQRFKFPRPMTDRPGLDFSFSGLKTFTLNTLQEAEASGGVDDNLRADVAACFQEAVVETMVIKCRRALRQTGLKRLIMAGGVSANRRLREKLQQMVKGEKALVYYARPEFCTDNGAMIAYAGHQRLAVGQRGDLSVLATPRWPLVELPSIKG</sequence>
<dbReference type="EC" id="2.3.1.234" evidence="1"/>
<dbReference type="EMBL" id="CP000155">
    <property type="protein sequence ID" value="ABC32917.1"/>
    <property type="status" value="ALT_INIT"/>
    <property type="molecule type" value="Genomic_DNA"/>
</dbReference>
<dbReference type="RefSeq" id="WP_041600021.1">
    <property type="nucleotide sequence ID" value="NC_007645.1"/>
</dbReference>
<dbReference type="SMR" id="Q2S8V7"/>
<dbReference type="STRING" id="349521.HCH_06270"/>
<dbReference type="KEGG" id="hch:HCH_06270"/>
<dbReference type="eggNOG" id="COG0533">
    <property type="taxonomic scope" value="Bacteria"/>
</dbReference>
<dbReference type="HOGENOM" id="CLU_023208_0_2_6"/>
<dbReference type="OrthoDB" id="9806197at2"/>
<dbReference type="Proteomes" id="UP000000238">
    <property type="component" value="Chromosome"/>
</dbReference>
<dbReference type="GO" id="GO:0005737">
    <property type="term" value="C:cytoplasm"/>
    <property type="evidence" value="ECO:0007669"/>
    <property type="project" value="UniProtKB-SubCell"/>
</dbReference>
<dbReference type="GO" id="GO:0005506">
    <property type="term" value="F:iron ion binding"/>
    <property type="evidence" value="ECO:0007669"/>
    <property type="project" value="UniProtKB-UniRule"/>
</dbReference>
<dbReference type="GO" id="GO:0061711">
    <property type="term" value="F:N(6)-L-threonylcarbamoyladenine synthase activity"/>
    <property type="evidence" value="ECO:0007669"/>
    <property type="project" value="UniProtKB-EC"/>
</dbReference>
<dbReference type="GO" id="GO:0002949">
    <property type="term" value="P:tRNA threonylcarbamoyladenosine modification"/>
    <property type="evidence" value="ECO:0007669"/>
    <property type="project" value="UniProtKB-UniRule"/>
</dbReference>
<dbReference type="CDD" id="cd24133">
    <property type="entry name" value="ASKHA_NBD_TsaD_bac"/>
    <property type="match status" value="1"/>
</dbReference>
<dbReference type="FunFam" id="3.30.420.40:FF:000012">
    <property type="entry name" value="tRNA N6-adenosine threonylcarbamoyltransferase"/>
    <property type="match status" value="1"/>
</dbReference>
<dbReference type="FunFam" id="3.30.420.40:FF:000031">
    <property type="entry name" value="tRNA N6-adenosine threonylcarbamoyltransferase"/>
    <property type="match status" value="1"/>
</dbReference>
<dbReference type="Gene3D" id="3.30.420.40">
    <property type="match status" value="2"/>
</dbReference>
<dbReference type="HAMAP" id="MF_01445">
    <property type="entry name" value="TsaD"/>
    <property type="match status" value="1"/>
</dbReference>
<dbReference type="InterPro" id="IPR043129">
    <property type="entry name" value="ATPase_NBD"/>
</dbReference>
<dbReference type="InterPro" id="IPR000905">
    <property type="entry name" value="Gcp-like_dom"/>
</dbReference>
<dbReference type="InterPro" id="IPR017861">
    <property type="entry name" value="KAE1/TsaD"/>
</dbReference>
<dbReference type="InterPro" id="IPR022450">
    <property type="entry name" value="TsaD"/>
</dbReference>
<dbReference type="NCBIfam" id="TIGR00329">
    <property type="entry name" value="gcp_kae1"/>
    <property type="match status" value="1"/>
</dbReference>
<dbReference type="NCBIfam" id="TIGR03723">
    <property type="entry name" value="T6A_TsaD_YgjD"/>
    <property type="match status" value="1"/>
</dbReference>
<dbReference type="PANTHER" id="PTHR11735">
    <property type="entry name" value="TRNA N6-ADENOSINE THREONYLCARBAMOYLTRANSFERASE"/>
    <property type="match status" value="1"/>
</dbReference>
<dbReference type="PANTHER" id="PTHR11735:SF6">
    <property type="entry name" value="TRNA N6-ADENOSINE THREONYLCARBAMOYLTRANSFERASE, MITOCHONDRIAL"/>
    <property type="match status" value="1"/>
</dbReference>
<dbReference type="Pfam" id="PF00814">
    <property type="entry name" value="TsaD"/>
    <property type="match status" value="1"/>
</dbReference>
<dbReference type="PRINTS" id="PR00789">
    <property type="entry name" value="OSIALOPTASE"/>
</dbReference>
<dbReference type="SUPFAM" id="SSF53067">
    <property type="entry name" value="Actin-like ATPase domain"/>
    <property type="match status" value="1"/>
</dbReference>
<proteinExistence type="inferred from homology"/>
<gene>
    <name evidence="1" type="primary">tsaD</name>
    <name type="synonym">gcp</name>
    <name type="ordered locus">HCH_06270</name>
</gene>
<name>TSAD_HAHCH</name>
<accession>Q2S8V7</accession>
<organism>
    <name type="scientific">Hahella chejuensis (strain KCTC 2396)</name>
    <dbReference type="NCBI Taxonomy" id="349521"/>
    <lineage>
        <taxon>Bacteria</taxon>
        <taxon>Pseudomonadati</taxon>
        <taxon>Pseudomonadota</taxon>
        <taxon>Gammaproteobacteria</taxon>
        <taxon>Oceanospirillales</taxon>
        <taxon>Hahellaceae</taxon>
        <taxon>Hahella</taxon>
    </lineage>
</organism>
<protein>
    <recommendedName>
        <fullName evidence="1">tRNA N6-adenosine threonylcarbamoyltransferase</fullName>
        <ecNumber evidence="1">2.3.1.234</ecNumber>
    </recommendedName>
    <alternativeName>
        <fullName evidence="1">N6-L-threonylcarbamoyladenine synthase</fullName>
        <shortName evidence="1">t(6)A synthase</shortName>
    </alternativeName>
    <alternativeName>
        <fullName evidence="1">t(6)A37 threonylcarbamoyladenosine biosynthesis protein TsaD</fullName>
    </alternativeName>
    <alternativeName>
        <fullName evidence="1">tRNA threonylcarbamoyladenosine biosynthesis protein TsaD</fullName>
    </alternativeName>
</protein>
<keyword id="KW-0012">Acyltransferase</keyword>
<keyword id="KW-0963">Cytoplasm</keyword>
<keyword id="KW-0408">Iron</keyword>
<keyword id="KW-0479">Metal-binding</keyword>
<keyword id="KW-1185">Reference proteome</keyword>
<keyword id="KW-0808">Transferase</keyword>
<keyword id="KW-0819">tRNA processing</keyword>
<comment type="function">
    <text evidence="1">Required for the formation of a threonylcarbamoyl group on adenosine at position 37 (t(6)A37) in tRNAs that read codons beginning with adenine. Is involved in the transfer of the threonylcarbamoyl moiety of threonylcarbamoyl-AMP (TC-AMP) to the N6 group of A37, together with TsaE and TsaB. TsaD likely plays a direct catalytic role in this reaction.</text>
</comment>
<comment type="catalytic activity">
    <reaction evidence="1">
        <text>L-threonylcarbamoyladenylate + adenosine(37) in tRNA = N(6)-L-threonylcarbamoyladenosine(37) in tRNA + AMP + H(+)</text>
        <dbReference type="Rhea" id="RHEA:37059"/>
        <dbReference type="Rhea" id="RHEA-COMP:10162"/>
        <dbReference type="Rhea" id="RHEA-COMP:10163"/>
        <dbReference type="ChEBI" id="CHEBI:15378"/>
        <dbReference type="ChEBI" id="CHEBI:73682"/>
        <dbReference type="ChEBI" id="CHEBI:74411"/>
        <dbReference type="ChEBI" id="CHEBI:74418"/>
        <dbReference type="ChEBI" id="CHEBI:456215"/>
        <dbReference type="EC" id="2.3.1.234"/>
    </reaction>
</comment>
<comment type="cofactor">
    <cofactor evidence="1">
        <name>Fe(2+)</name>
        <dbReference type="ChEBI" id="CHEBI:29033"/>
    </cofactor>
    <text evidence="1">Binds 1 Fe(2+) ion per subunit.</text>
</comment>
<comment type="subcellular location">
    <subcellularLocation>
        <location evidence="1">Cytoplasm</location>
    </subcellularLocation>
</comment>
<comment type="similarity">
    <text evidence="1">Belongs to the KAE1 / TsaD family.</text>
</comment>
<comment type="sequence caution" evidence="2">
    <conflict type="erroneous initiation">
        <sequence resource="EMBL-CDS" id="ABC32917"/>
    </conflict>
</comment>
<reference key="1">
    <citation type="journal article" date="2005" name="Nucleic Acids Res.">
        <title>Genomic blueprint of Hahella chejuensis, a marine microbe producing an algicidal agent.</title>
        <authorList>
            <person name="Jeong H."/>
            <person name="Yim J.H."/>
            <person name="Lee C."/>
            <person name="Choi S.-H."/>
            <person name="Park Y.K."/>
            <person name="Yoon S.H."/>
            <person name="Hur C.-G."/>
            <person name="Kang H.-Y."/>
            <person name="Kim D."/>
            <person name="Lee H.H."/>
            <person name="Park K.H."/>
            <person name="Park S.-H."/>
            <person name="Park H.-S."/>
            <person name="Lee H.K."/>
            <person name="Oh T.K."/>
            <person name="Kim J.F."/>
        </authorList>
    </citation>
    <scope>NUCLEOTIDE SEQUENCE [LARGE SCALE GENOMIC DNA]</scope>
    <source>
        <strain>KCTC 2396</strain>
    </source>
</reference>
<evidence type="ECO:0000255" key="1">
    <source>
        <dbReference type="HAMAP-Rule" id="MF_01445"/>
    </source>
</evidence>
<evidence type="ECO:0000305" key="2"/>
<feature type="chain" id="PRO_0000303381" description="tRNA N6-adenosine threonylcarbamoyltransferase">
    <location>
        <begin position="1"/>
        <end position="343"/>
    </location>
</feature>
<feature type="binding site" evidence="1">
    <location>
        <position position="111"/>
    </location>
    <ligand>
        <name>Fe cation</name>
        <dbReference type="ChEBI" id="CHEBI:24875"/>
    </ligand>
</feature>
<feature type="binding site" evidence="1">
    <location>
        <position position="115"/>
    </location>
    <ligand>
        <name>Fe cation</name>
        <dbReference type="ChEBI" id="CHEBI:24875"/>
    </ligand>
</feature>
<feature type="binding site" evidence="1">
    <location>
        <begin position="134"/>
        <end position="138"/>
    </location>
    <ligand>
        <name>substrate</name>
    </ligand>
</feature>
<feature type="binding site" evidence="1">
    <location>
        <position position="167"/>
    </location>
    <ligand>
        <name>substrate</name>
    </ligand>
</feature>
<feature type="binding site" evidence="1">
    <location>
        <position position="180"/>
    </location>
    <ligand>
        <name>substrate</name>
    </ligand>
</feature>
<feature type="binding site" evidence="1">
    <location>
        <position position="276"/>
    </location>
    <ligand>
        <name>substrate</name>
    </ligand>
</feature>
<feature type="binding site" evidence="1">
    <location>
        <position position="304"/>
    </location>
    <ligand>
        <name>Fe cation</name>
        <dbReference type="ChEBI" id="CHEBI:24875"/>
    </ligand>
</feature>